<name>SPAR_BACIU</name>
<protein>
    <recommendedName>
        <fullName>Transcriptional regulatory protein SpaR</fullName>
    </recommendedName>
    <alternativeName>
        <fullName>Subtilin biosynthesis regulatory protein SpaR</fullName>
    </alternativeName>
</protein>
<comment type="function">
    <text>Member of the two-component regulatory system SpaK/SpaR involved in the regulation of the biosynthesis of lantibiotic subtilin. SpaR may function as a regulatory protein.</text>
</comment>
<comment type="subcellular location">
    <subcellularLocation>
        <location>Cytoplasm</location>
    </subcellularLocation>
</comment>
<comment type="PTM">
    <text evidence="3">Phosphorylated by SpaK.</text>
</comment>
<organism>
    <name type="scientific">Bacillus subtilis</name>
    <dbReference type="NCBI Taxonomy" id="1423"/>
    <lineage>
        <taxon>Bacteria</taxon>
        <taxon>Bacillati</taxon>
        <taxon>Bacillota</taxon>
        <taxon>Bacilli</taxon>
        <taxon>Bacillales</taxon>
        <taxon>Bacillaceae</taxon>
        <taxon>Bacillus</taxon>
    </lineage>
</organism>
<accession>P33112</accession>
<reference key="1">
    <citation type="journal article" date="1993" name="Appl. Environ. Microbiol.">
        <title>Biosynthesis of the lantibiotic subtilin is regulated by a histidine kinase/response regulator system.</title>
        <authorList>
            <person name="Klein C."/>
            <person name="Kaletta C."/>
            <person name="Entian K.-D."/>
        </authorList>
    </citation>
    <scope>NUCLEOTIDE SEQUENCE [GENOMIC DNA]</scope>
    <source>
        <strain>ATCC 6633 / PCI 219 / NRS 231</strain>
    </source>
</reference>
<dbReference type="EMBL" id="L07785">
    <property type="protein sequence ID" value="AAA22780.1"/>
    <property type="molecule type" value="Genomic_DNA"/>
</dbReference>
<dbReference type="EMBL" id="U09819">
    <property type="protein sequence ID" value="AAB91594.1"/>
    <property type="molecule type" value="Genomic_DNA"/>
</dbReference>
<dbReference type="PIR" id="A48965">
    <property type="entry name" value="A48965"/>
</dbReference>
<dbReference type="SMR" id="P33112"/>
<dbReference type="DIP" id="DIP-48346N"/>
<dbReference type="IntAct" id="P33112">
    <property type="interactions" value="1"/>
</dbReference>
<dbReference type="PATRIC" id="fig|1423.172.peg.2879"/>
<dbReference type="GO" id="GO:0005829">
    <property type="term" value="C:cytosol"/>
    <property type="evidence" value="ECO:0007669"/>
    <property type="project" value="TreeGrafter"/>
</dbReference>
<dbReference type="GO" id="GO:0032993">
    <property type="term" value="C:protein-DNA complex"/>
    <property type="evidence" value="ECO:0007669"/>
    <property type="project" value="TreeGrafter"/>
</dbReference>
<dbReference type="GO" id="GO:0000156">
    <property type="term" value="F:phosphorelay response regulator activity"/>
    <property type="evidence" value="ECO:0007669"/>
    <property type="project" value="TreeGrafter"/>
</dbReference>
<dbReference type="GO" id="GO:0000976">
    <property type="term" value="F:transcription cis-regulatory region binding"/>
    <property type="evidence" value="ECO:0007669"/>
    <property type="project" value="TreeGrafter"/>
</dbReference>
<dbReference type="GO" id="GO:0006355">
    <property type="term" value="P:regulation of DNA-templated transcription"/>
    <property type="evidence" value="ECO:0007669"/>
    <property type="project" value="InterPro"/>
</dbReference>
<dbReference type="CDD" id="cd17574">
    <property type="entry name" value="REC_OmpR"/>
    <property type="match status" value="1"/>
</dbReference>
<dbReference type="CDD" id="cd00383">
    <property type="entry name" value="trans_reg_C"/>
    <property type="match status" value="1"/>
</dbReference>
<dbReference type="Gene3D" id="3.40.50.2300">
    <property type="match status" value="1"/>
</dbReference>
<dbReference type="Gene3D" id="6.10.250.690">
    <property type="match status" value="1"/>
</dbReference>
<dbReference type="Gene3D" id="1.10.10.10">
    <property type="entry name" value="Winged helix-like DNA-binding domain superfamily/Winged helix DNA-binding domain"/>
    <property type="match status" value="1"/>
</dbReference>
<dbReference type="InterPro" id="IPR011006">
    <property type="entry name" value="CheY-like_superfamily"/>
</dbReference>
<dbReference type="InterPro" id="IPR001867">
    <property type="entry name" value="OmpR/PhoB-type_DNA-bd"/>
</dbReference>
<dbReference type="InterPro" id="IPR016032">
    <property type="entry name" value="Sig_transdc_resp-reg_C-effctor"/>
</dbReference>
<dbReference type="InterPro" id="IPR001789">
    <property type="entry name" value="Sig_transdc_resp-reg_receiver"/>
</dbReference>
<dbReference type="InterPro" id="IPR039420">
    <property type="entry name" value="WalR-like"/>
</dbReference>
<dbReference type="InterPro" id="IPR036388">
    <property type="entry name" value="WH-like_DNA-bd_sf"/>
</dbReference>
<dbReference type="PANTHER" id="PTHR48111">
    <property type="entry name" value="REGULATOR OF RPOS"/>
    <property type="match status" value="1"/>
</dbReference>
<dbReference type="PANTHER" id="PTHR48111:SF2">
    <property type="entry name" value="RESPONSE REGULATOR SAER"/>
    <property type="match status" value="1"/>
</dbReference>
<dbReference type="Pfam" id="PF00072">
    <property type="entry name" value="Response_reg"/>
    <property type="match status" value="1"/>
</dbReference>
<dbReference type="Pfam" id="PF00486">
    <property type="entry name" value="Trans_reg_C"/>
    <property type="match status" value="1"/>
</dbReference>
<dbReference type="SMART" id="SM00448">
    <property type="entry name" value="REC"/>
    <property type="match status" value="1"/>
</dbReference>
<dbReference type="SMART" id="SM00862">
    <property type="entry name" value="Trans_reg_C"/>
    <property type="match status" value="1"/>
</dbReference>
<dbReference type="SUPFAM" id="SSF46894">
    <property type="entry name" value="C-terminal effector domain of the bipartite response regulators"/>
    <property type="match status" value="1"/>
</dbReference>
<dbReference type="SUPFAM" id="SSF52172">
    <property type="entry name" value="CheY-like"/>
    <property type="match status" value="1"/>
</dbReference>
<dbReference type="PROSITE" id="PS51755">
    <property type="entry name" value="OMPR_PHOB"/>
    <property type="match status" value="1"/>
</dbReference>
<dbReference type="PROSITE" id="PS50110">
    <property type="entry name" value="RESPONSE_REGULATORY"/>
    <property type="match status" value="1"/>
</dbReference>
<sequence>MAKILAVDDEKDILVLIQNILRRDQHQVDILDHVHGQPPDVFQGYDLILLDVMMPDIDGFELCKQIRPLVDCPILFLTAKTEEEAIVKGLITGGDDYITKPFGVRELSARVNAHLRRERRDKHQSKRVISGFLFHFDSKEVFINNNKLNLTKNEYKICEFLAQHKGRTFSREQIYEEIYGLEGNALYSTITEFIRTIRKKCKEHNADPIKTVWGVGYKWE</sequence>
<keyword id="KW-0010">Activator</keyword>
<keyword id="KW-0963">Cytoplasm</keyword>
<keyword id="KW-0238">DNA-binding</keyword>
<keyword id="KW-0597">Phosphoprotein</keyword>
<keyword id="KW-0804">Transcription</keyword>
<keyword id="KW-0805">Transcription regulation</keyword>
<keyword id="KW-0902">Two-component regulatory system</keyword>
<feature type="chain" id="PRO_0000081225" description="Transcriptional regulatory protein SpaR">
    <location>
        <begin position="1"/>
        <end position="220"/>
    </location>
</feature>
<feature type="domain" description="Response regulatory" evidence="1">
    <location>
        <begin position="3"/>
        <end position="115"/>
    </location>
</feature>
<feature type="DNA-binding region" description="OmpR/PhoB-type" evidence="2">
    <location>
        <begin position="124"/>
        <end position="220"/>
    </location>
</feature>
<feature type="modified residue" description="4-aspartylphosphate" evidence="1">
    <location>
        <position position="51"/>
    </location>
</feature>
<proteinExistence type="inferred from homology"/>
<evidence type="ECO:0000255" key="1">
    <source>
        <dbReference type="PROSITE-ProRule" id="PRU00169"/>
    </source>
</evidence>
<evidence type="ECO:0000255" key="2">
    <source>
        <dbReference type="PROSITE-ProRule" id="PRU01091"/>
    </source>
</evidence>
<evidence type="ECO:0000305" key="3"/>
<gene>
    <name type="primary">spaR</name>
</gene>